<evidence type="ECO:0000250" key="1">
    <source>
        <dbReference type="UniProtKB" id="P10221"/>
    </source>
</evidence>
<evidence type="ECO:0000255" key="2">
    <source>
        <dbReference type="HAMAP-Rule" id="MF_04043"/>
    </source>
</evidence>
<dbReference type="EMBL" id="AF005370">
    <property type="protein sequence ID" value="AAC58110.1"/>
    <property type="molecule type" value="Genomic_DNA"/>
</dbReference>
<dbReference type="PIR" id="T03158">
    <property type="entry name" value="T03158"/>
</dbReference>
<dbReference type="RefSeq" id="NP_065562.1">
    <property type="nucleotide sequence ID" value="NC_002531.1"/>
</dbReference>
<dbReference type="KEGG" id="vg:911787"/>
<dbReference type="Proteomes" id="UP000000941">
    <property type="component" value="Segment"/>
</dbReference>
<dbReference type="GO" id="GO:0044177">
    <property type="term" value="C:host cell Golgi apparatus"/>
    <property type="evidence" value="ECO:0007669"/>
    <property type="project" value="UniProtKB-SubCell"/>
</dbReference>
<dbReference type="GO" id="GO:0042025">
    <property type="term" value="C:host cell nucleus"/>
    <property type="evidence" value="ECO:0007669"/>
    <property type="project" value="UniProtKB-SubCell"/>
</dbReference>
<dbReference type="GO" id="GO:0019033">
    <property type="term" value="C:viral tegument"/>
    <property type="evidence" value="ECO:0007669"/>
    <property type="project" value="UniProtKB-SubCell"/>
</dbReference>
<dbReference type="GO" id="GO:0019068">
    <property type="term" value="P:virion assembly"/>
    <property type="evidence" value="ECO:0007669"/>
    <property type="project" value="InterPro"/>
</dbReference>
<dbReference type="HAMAP" id="MF_04043">
    <property type="entry name" value="HSV_ITP"/>
    <property type="match status" value="1"/>
</dbReference>
<dbReference type="InterPro" id="IPR007611">
    <property type="entry name" value="Herpes_U30"/>
</dbReference>
<dbReference type="InterPro" id="IPR034738">
    <property type="entry name" value="HSV_ITP"/>
</dbReference>
<dbReference type="Pfam" id="PF04523">
    <property type="entry name" value="Herpes_U30"/>
    <property type="match status" value="1"/>
</dbReference>
<reference key="1">
    <citation type="journal article" date="1997" name="J. Virol.">
        <title>Primary structure of the alcelaphine herpesvirus 1 genome.</title>
        <authorList>
            <person name="Ensser A."/>
            <person name="Pflanz R."/>
            <person name="Fleckenstein B."/>
        </authorList>
    </citation>
    <scope>NUCLEOTIDE SEQUENCE [LARGE SCALE GENOMIC DNA]</scope>
</reference>
<feature type="chain" id="PRO_0000405769" description="Inner tegument protein">
    <location>
        <begin position="1"/>
        <end position="952"/>
    </location>
</feature>
<feature type="region of interest" description="Interaction with large tegument protein" evidence="1">
    <location>
        <begin position="490"/>
        <end position="952"/>
    </location>
</feature>
<name>ITP_ALHV1</name>
<sequence length="952" mass="107067">MMENKRSLLKITQNIQNVTSKLAKLREILDLEMKMIDATELCNQQLVVKFLNSLPQEQGGLIEFVTTHYVYFLFKNCTLSPQFLERGTEHEEVVSKCLHLLKSAVECMSQITSDLFGCQGSGLLSNRNILSELQLFLTWAQNVNRNSTELTSLPTTPVQTFLCAEEIMSLLYLSKLYNTIPSVQFNMPNFQTMGVLEQWTISLYTSTVGLPTGPYQLPNATELACALVSRHADLFISPTHVSQPLLTFPFAKKRANLIFQSYLNNPQASITETGPLVQLREADLQTLDTTFFFLYDYIFEALSNNQAYSCSAATVNNFIARCVDSLTDLGSNLLEASTASRGPSNNIDAFKGFLLRAGLTEKNCSDFKTLLLLNKSNGHTQWKQFPKLLRLVTQLTLTAHYFYACLQQYSPTSLARCKITDTLKMAAAEQMVEYQASGSGKQSKPFEWTIPGILSFFIPQPPTELLQVMSDNISSPYMQSFFWISAHRAWQLKPHTILQRELSPTPLPSSPCNEEDVKKYCREIQVGDTAYQLNIVKCDTFELEFIKTHAFPILQNIFSMDLHIHRAMVQLRWLITFAADAPPFLSTLRKPLILLYFQINDIISQNRVDTSFINMLDYTKDVLTAVQEAVPSAEFSPNLINYLFLTHFSSSLKILMDTVNEFVTETTTVAESVASLARVGATICHSVFSFNTRNDTLEFPIAGENGDEIFQISVPAFKSTVANLQQNCYDVIVLLNESSRELHASYLDLQVISSDIDSMRNHSIKFDHASLNFKGMKDFYIKCFALQNKLASKIANTCCYSLTRRFAPLFEPELISLQTVENILNFSDTVDDPSVFLSGINQPMGCVPPNCQQGAVEKLSKQDVLDIRELAPDFTEGASSAPANATVIKHNFTGTFDKVSIDLDQSSLNTEFTFADKEYNLRTLRQLKLIFLEDLLSNTPQSPPPTDPALTN</sequence>
<organismHost>
    <name type="scientific">Connochaetes taurinus</name>
    <name type="common">Blue wildebeest</name>
    <dbReference type="NCBI Taxonomy" id="9927"/>
</organismHost>
<gene>
    <name type="primary">63</name>
</gene>
<proteinExistence type="inferred from homology"/>
<organism>
    <name type="scientific">Alcelaphine herpesvirus 1 (strain C500)</name>
    <name type="common">AlHV-1</name>
    <name type="synonym">Malignant catarrhal fever virus</name>
    <dbReference type="NCBI Taxonomy" id="654901"/>
    <lineage>
        <taxon>Viruses</taxon>
        <taxon>Duplodnaviria</taxon>
        <taxon>Heunggongvirae</taxon>
        <taxon>Peploviricota</taxon>
        <taxon>Herviviricetes</taxon>
        <taxon>Herpesvirales</taxon>
        <taxon>Orthoherpesviridae</taxon>
        <taxon>Gammaherpesvirinae</taxon>
        <taxon>Macavirus</taxon>
        <taxon>Macavirus alcelaphinegamma1</taxon>
    </lineage>
</organism>
<protein>
    <recommendedName>
        <fullName evidence="2">Inner tegument protein</fullName>
    </recommendedName>
</protein>
<keyword id="KW-1035">Host cytoplasm</keyword>
<keyword id="KW-1040">Host Golgi apparatus</keyword>
<keyword id="KW-1048">Host nucleus</keyword>
<keyword id="KW-1185">Reference proteome</keyword>
<keyword id="KW-0946">Virion</keyword>
<keyword id="KW-0920">Virion tegument</keyword>
<comment type="function">
    <text evidence="2">Plays an essential role in cytoplasmic secondary envelopment during viral egress. Interacts with the capsid via the large tegument protein/LTP and participates in its transport to the host trans-Golgi network (TGN) where secondary envelopment occurs. Modulates tegumentation and capsid accumulation at the viral assembly complex.</text>
</comment>
<comment type="subunit">
    <text evidence="2">Interacts (via C-terminus) with the large tegument protein/LTP (via N-terminus).</text>
</comment>
<comment type="subcellular location">
    <subcellularLocation>
        <location evidence="2">Virion tegument</location>
    </subcellularLocation>
    <subcellularLocation>
        <location evidence="2">Host cytoplasm</location>
    </subcellularLocation>
    <subcellularLocation>
        <location evidence="2">Host nucleus</location>
    </subcellularLocation>
    <subcellularLocation>
        <location evidence="2">Host Golgi apparatus</location>
        <location evidence="2">Host trans-Golgi network</location>
    </subcellularLocation>
</comment>
<comment type="similarity">
    <text evidence="2">Belongs to the herpesviridae inner tegument protein family.</text>
</comment>
<accession>O36413</accession>